<feature type="chain" id="PRO_1000003811" description="Nucleoid-associated protein RPD_0086">
    <location>
        <begin position="1"/>
        <end position="106"/>
    </location>
</feature>
<gene>
    <name type="ordered locus">RPD_0086</name>
</gene>
<accession>Q13F13</accession>
<reference key="1">
    <citation type="submission" date="2006-03" db="EMBL/GenBank/DDBJ databases">
        <title>Complete sequence of Rhodopseudomonas palustris BisB5.</title>
        <authorList>
            <consortium name="US DOE Joint Genome Institute"/>
            <person name="Copeland A."/>
            <person name="Lucas S."/>
            <person name="Lapidus A."/>
            <person name="Barry K."/>
            <person name="Detter J.C."/>
            <person name="Glavina del Rio T."/>
            <person name="Hammon N."/>
            <person name="Israni S."/>
            <person name="Dalin E."/>
            <person name="Tice H."/>
            <person name="Pitluck S."/>
            <person name="Chain P."/>
            <person name="Malfatti S."/>
            <person name="Shin M."/>
            <person name="Vergez L."/>
            <person name="Schmutz J."/>
            <person name="Larimer F."/>
            <person name="Land M."/>
            <person name="Hauser L."/>
            <person name="Pelletier D.A."/>
            <person name="Kyrpides N."/>
            <person name="Lykidis A."/>
            <person name="Oda Y."/>
            <person name="Harwood C.S."/>
            <person name="Richardson P."/>
        </authorList>
    </citation>
    <scope>NUCLEOTIDE SEQUENCE [LARGE SCALE GENOMIC DNA]</scope>
    <source>
        <strain>BisB5</strain>
    </source>
</reference>
<dbReference type="EMBL" id="CP000283">
    <property type="protein sequence ID" value="ABE37326.1"/>
    <property type="molecule type" value="Genomic_DNA"/>
</dbReference>
<dbReference type="SMR" id="Q13F13"/>
<dbReference type="STRING" id="316057.RPD_0086"/>
<dbReference type="KEGG" id="rpd:RPD_0086"/>
<dbReference type="eggNOG" id="COG0718">
    <property type="taxonomic scope" value="Bacteria"/>
</dbReference>
<dbReference type="HOGENOM" id="CLU_140930_0_1_5"/>
<dbReference type="BioCyc" id="RPAL316057:RPD_RS00430-MONOMER"/>
<dbReference type="Proteomes" id="UP000001818">
    <property type="component" value="Chromosome"/>
</dbReference>
<dbReference type="GO" id="GO:0043590">
    <property type="term" value="C:bacterial nucleoid"/>
    <property type="evidence" value="ECO:0007669"/>
    <property type="project" value="UniProtKB-UniRule"/>
</dbReference>
<dbReference type="GO" id="GO:0005829">
    <property type="term" value="C:cytosol"/>
    <property type="evidence" value="ECO:0007669"/>
    <property type="project" value="TreeGrafter"/>
</dbReference>
<dbReference type="GO" id="GO:0003677">
    <property type="term" value="F:DNA binding"/>
    <property type="evidence" value="ECO:0007669"/>
    <property type="project" value="UniProtKB-UniRule"/>
</dbReference>
<dbReference type="Gene3D" id="3.30.1310.10">
    <property type="entry name" value="Nucleoid-associated protein YbaB-like domain"/>
    <property type="match status" value="1"/>
</dbReference>
<dbReference type="HAMAP" id="MF_00274">
    <property type="entry name" value="DNA_YbaB_EbfC"/>
    <property type="match status" value="1"/>
</dbReference>
<dbReference type="InterPro" id="IPR036894">
    <property type="entry name" value="YbaB-like_sf"/>
</dbReference>
<dbReference type="InterPro" id="IPR004401">
    <property type="entry name" value="YbaB/EbfC"/>
</dbReference>
<dbReference type="NCBIfam" id="TIGR00103">
    <property type="entry name" value="DNA_YbaB_EbfC"/>
    <property type="match status" value="1"/>
</dbReference>
<dbReference type="PANTHER" id="PTHR33449">
    <property type="entry name" value="NUCLEOID-ASSOCIATED PROTEIN YBAB"/>
    <property type="match status" value="1"/>
</dbReference>
<dbReference type="PANTHER" id="PTHR33449:SF1">
    <property type="entry name" value="NUCLEOID-ASSOCIATED PROTEIN YBAB"/>
    <property type="match status" value="1"/>
</dbReference>
<dbReference type="Pfam" id="PF02575">
    <property type="entry name" value="YbaB_DNA_bd"/>
    <property type="match status" value="1"/>
</dbReference>
<dbReference type="PIRSF" id="PIRSF004555">
    <property type="entry name" value="UCP004555"/>
    <property type="match status" value="1"/>
</dbReference>
<dbReference type="SUPFAM" id="SSF82607">
    <property type="entry name" value="YbaB-like"/>
    <property type="match status" value="1"/>
</dbReference>
<comment type="function">
    <text evidence="1">Binds to DNA and alters its conformation. May be involved in regulation of gene expression, nucleoid organization and DNA protection.</text>
</comment>
<comment type="subunit">
    <text evidence="1">Homodimer.</text>
</comment>
<comment type="subcellular location">
    <subcellularLocation>
        <location evidence="1">Cytoplasm</location>
        <location evidence="1">Nucleoid</location>
    </subcellularLocation>
</comment>
<comment type="similarity">
    <text evidence="1">Belongs to the YbaB/EbfC family.</text>
</comment>
<protein>
    <recommendedName>
        <fullName evidence="1">Nucleoid-associated protein RPD_0086</fullName>
    </recommendedName>
</protein>
<evidence type="ECO:0000255" key="1">
    <source>
        <dbReference type="HAMAP-Rule" id="MF_00274"/>
    </source>
</evidence>
<organism>
    <name type="scientific">Rhodopseudomonas palustris (strain BisB5)</name>
    <dbReference type="NCBI Taxonomy" id="316057"/>
    <lineage>
        <taxon>Bacteria</taxon>
        <taxon>Pseudomonadati</taxon>
        <taxon>Pseudomonadota</taxon>
        <taxon>Alphaproteobacteria</taxon>
        <taxon>Hyphomicrobiales</taxon>
        <taxon>Nitrobacteraceae</taxon>
        <taxon>Rhodopseudomonas</taxon>
    </lineage>
</organism>
<proteinExistence type="inferred from homology"/>
<name>Y086_RHOPS</name>
<keyword id="KW-0963">Cytoplasm</keyword>
<keyword id="KW-0238">DNA-binding</keyword>
<sequence length="106" mass="11045">MADFLGMMKQAAQLQSKMKAMQAELDQIEVEGSSGGGLVQVRMSAKMEVRGVSIDPSLLKPDEGGVLEDLLVAAHADAHRKAEAAMQEKMQALTGGLGLPPGLGLG</sequence>